<reference key="1">
    <citation type="journal article" date="2001" name="Lancet">
        <title>Whole genome sequencing of meticillin-resistant Staphylococcus aureus.</title>
        <authorList>
            <person name="Kuroda M."/>
            <person name="Ohta T."/>
            <person name="Uchiyama I."/>
            <person name="Baba T."/>
            <person name="Yuzawa H."/>
            <person name="Kobayashi I."/>
            <person name="Cui L."/>
            <person name="Oguchi A."/>
            <person name="Aoki K."/>
            <person name="Nagai Y."/>
            <person name="Lian J.-Q."/>
            <person name="Ito T."/>
            <person name="Kanamori M."/>
            <person name="Matsumaru H."/>
            <person name="Maruyama A."/>
            <person name="Murakami H."/>
            <person name="Hosoyama A."/>
            <person name="Mizutani-Ui Y."/>
            <person name="Takahashi N.K."/>
            <person name="Sawano T."/>
            <person name="Inoue R."/>
            <person name="Kaito C."/>
            <person name="Sekimizu K."/>
            <person name="Hirakawa H."/>
            <person name="Kuhara S."/>
            <person name="Goto S."/>
            <person name="Yabuzaki J."/>
            <person name="Kanehisa M."/>
            <person name="Yamashita A."/>
            <person name="Oshima K."/>
            <person name="Furuya K."/>
            <person name="Yoshino C."/>
            <person name="Shiba T."/>
            <person name="Hattori M."/>
            <person name="Ogasawara N."/>
            <person name="Hayashi H."/>
            <person name="Hiramatsu K."/>
        </authorList>
    </citation>
    <scope>NUCLEOTIDE SEQUENCE [LARGE SCALE GENOMIC DNA]</scope>
    <source>
        <strain>N315</strain>
    </source>
</reference>
<reference key="2">
    <citation type="submission" date="2007-10" db="UniProtKB">
        <title>Shotgun proteomic analysis of total and membrane protein extracts of S. aureus strain N315.</title>
        <authorList>
            <person name="Vaezzadeh A.R."/>
            <person name="Deshusses J."/>
            <person name="Lescuyer P."/>
            <person name="Hochstrasser D.F."/>
        </authorList>
    </citation>
    <scope>IDENTIFICATION BY MASS SPECTROMETRY [LARGE SCALE ANALYSIS]</scope>
    <source>
        <strain>N315</strain>
    </source>
</reference>
<keyword id="KW-0687">Ribonucleoprotein</keyword>
<keyword id="KW-0689">Ribosomal protein</keyword>
<keyword id="KW-0694">RNA-binding</keyword>
<keyword id="KW-0699">rRNA-binding</keyword>
<comment type="function">
    <text evidence="1">One of the primary rRNA binding proteins, it binds specifically to the 5'-end of 16S ribosomal RNA.</text>
</comment>
<comment type="subunit">
    <text evidence="1">Part of the 30S ribosomal subunit.</text>
</comment>
<comment type="similarity">
    <text evidence="1">Belongs to the universal ribosomal protein uS17 family.</text>
</comment>
<organism>
    <name type="scientific">Staphylococcus aureus (strain N315)</name>
    <dbReference type="NCBI Taxonomy" id="158879"/>
    <lineage>
        <taxon>Bacteria</taxon>
        <taxon>Bacillati</taxon>
        <taxon>Bacillota</taxon>
        <taxon>Bacilli</taxon>
        <taxon>Bacillales</taxon>
        <taxon>Staphylococcaceae</taxon>
        <taxon>Staphylococcus</taxon>
    </lineage>
</organism>
<sequence>MSERNDRKVYVGKVVSDKMDKTITVLVETYKTHKLYGKRVKYSKKYKTHDENNSAKLGDIVKIQETRPLSATKRFRIVEIVEESVII</sequence>
<accession>Q7A462</accession>
<evidence type="ECO:0000255" key="1">
    <source>
        <dbReference type="HAMAP-Rule" id="MF_01345"/>
    </source>
</evidence>
<evidence type="ECO:0000305" key="2"/>
<dbReference type="EMBL" id="BA000018">
    <property type="protein sequence ID" value="BAB43333.1"/>
    <property type="molecule type" value="Genomic_DNA"/>
</dbReference>
<dbReference type="PIR" id="D90021">
    <property type="entry name" value="D90021"/>
</dbReference>
<dbReference type="RefSeq" id="WP_000004085.1">
    <property type="nucleotide sequence ID" value="NC_002745.2"/>
</dbReference>
<dbReference type="SMR" id="Q7A462"/>
<dbReference type="EnsemblBacteria" id="BAB43333">
    <property type="protein sequence ID" value="BAB43333"/>
    <property type="gene ID" value="BAB43333"/>
</dbReference>
<dbReference type="KEGG" id="sau:SA2038"/>
<dbReference type="HOGENOM" id="CLU_073626_1_0_9"/>
<dbReference type="GO" id="GO:0022627">
    <property type="term" value="C:cytosolic small ribosomal subunit"/>
    <property type="evidence" value="ECO:0007669"/>
    <property type="project" value="TreeGrafter"/>
</dbReference>
<dbReference type="GO" id="GO:0019843">
    <property type="term" value="F:rRNA binding"/>
    <property type="evidence" value="ECO:0007669"/>
    <property type="project" value="UniProtKB-UniRule"/>
</dbReference>
<dbReference type="GO" id="GO:0003735">
    <property type="term" value="F:structural constituent of ribosome"/>
    <property type="evidence" value="ECO:0007669"/>
    <property type="project" value="InterPro"/>
</dbReference>
<dbReference type="GO" id="GO:0006412">
    <property type="term" value="P:translation"/>
    <property type="evidence" value="ECO:0007669"/>
    <property type="project" value="UniProtKB-UniRule"/>
</dbReference>
<dbReference type="CDD" id="cd00364">
    <property type="entry name" value="Ribosomal_uS17"/>
    <property type="match status" value="1"/>
</dbReference>
<dbReference type="FunFam" id="2.40.50.140:FF:000026">
    <property type="entry name" value="30S ribosomal protein S17"/>
    <property type="match status" value="1"/>
</dbReference>
<dbReference type="Gene3D" id="2.40.50.140">
    <property type="entry name" value="Nucleic acid-binding proteins"/>
    <property type="match status" value="1"/>
</dbReference>
<dbReference type="HAMAP" id="MF_01345_B">
    <property type="entry name" value="Ribosomal_uS17_B"/>
    <property type="match status" value="1"/>
</dbReference>
<dbReference type="InterPro" id="IPR012340">
    <property type="entry name" value="NA-bd_OB-fold"/>
</dbReference>
<dbReference type="InterPro" id="IPR000266">
    <property type="entry name" value="Ribosomal_uS17"/>
</dbReference>
<dbReference type="InterPro" id="IPR019984">
    <property type="entry name" value="Ribosomal_uS17_bact/chlr"/>
</dbReference>
<dbReference type="InterPro" id="IPR019979">
    <property type="entry name" value="Ribosomal_uS17_CS"/>
</dbReference>
<dbReference type="NCBIfam" id="NF004123">
    <property type="entry name" value="PRK05610.1"/>
    <property type="match status" value="1"/>
</dbReference>
<dbReference type="NCBIfam" id="TIGR03635">
    <property type="entry name" value="uS17_bact"/>
    <property type="match status" value="1"/>
</dbReference>
<dbReference type="PANTHER" id="PTHR10744">
    <property type="entry name" value="40S RIBOSOMAL PROTEIN S11 FAMILY MEMBER"/>
    <property type="match status" value="1"/>
</dbReference>
<dbReference type="PANTHER" id="PTHR10744:SF1">
    <property type="entry name" value="SMALL RIBOSOMAL SUBUNIT PROTEIN US17M"/>
    <property type="match status" value="1"/>
</dbReference>
<dbReference type="Pfam" id="PF00366">
    <property type="entry name" value="Ribosomal_S17"/>
    <property type="match status" value="1"/>
</dbReference>
<dbReference type="PRINTS" id="PR00973">
    <property type="entry name" value="RIBOSOMALS17"/>
</dbReference>
<dbReference type="SUPFAM" id="SSF50249">
    <property type="entry name" value="Nucleic acid-binding proteins"/>
    <property type="match status" value="1"/>
</dbReference>
<dbReference type="PROSITE" id="PS00056">
    <property type="entry name" value="RIBOSOMAL_S17"/>
    <property type="match status" value="1"/>
</dbReference>
<gene>
    <name evidence="1" type="primary">rpsQ</name>
    <name type="ordered locus">SA2038</name>
</gene>
<proteinExistence type="evidence at protein level"/>
<feature type="chain" id="PRO_0000128480" description="Small ribosomal subunit protein uS17">
    <location>
        <begin position="1"/>
        <end position="87"/>
    </location>
</feature>
<name>RS17_STAAN</name>
<protein>
    <recommendedName>
        <fullName evidence="1">Small ribosomal subunit protein uS17</fullName>
    </recommendedName>
    <alternativeName>
        <fullName evidence="2">30S ribosomal protein S17</fullName>
    </alternativeName>
</protein>